<feature type="chain" id="PRO_0000093764" description="GMP reductase">
    <location>
        <begin position="1"/>
        <end position="325"/>
    </location>
</feature>
<feature type="active site" description="Thioimidate intermediate" evidence="1">
    <location>
        <position position="174"/>
    </location>
</feature>
<feature type="binding site" evidence="1">
    <location>
        <begin position="203"/>
        <end position="226"/>
    </location>
    <ligand>
        <name>NADP(+)</name>
        <dbReference type="ChEBI" id="CHEBI:58349"/>
    </ligand>
</feature>
<comment type="function">
    <text evidence="1">Catalyzes the irreversible NADPH-dependent deamination of GMP to IMP. It functions in the conversion of nucleobase, nucleoside and nucleotide derivatives of G to A nucleotides, and in maintaining the intracellular balance of A and G nucleotides.</text>
</comment>
<comment type="catalytic activity">
    <reaction evidence="1">
        <text>IMP + NH4(+) + NADP(+) = GMP + NADPH + 2 H(+)</text>
        <dbReference type="Rhea" id="RHEA:17185"/>
        <dbReference type="ChEBI" id="CHEBI:15378"/>
        <dbReference type="ChEBI" id="CHEBI:28938"/>
        <dbReference type="ChEBI" id="CHEBI:57783"/>
        <dbReference type="ChEBI" id="CHEBI:58053"/>
        <dbReference type="ChEBI" id="CHEBI:58115"/>
        <dbReference type="ChEBI" id="CHEBI:58349"/>
        <dbReference type="EC" id="1.7.1.7"/>
    </reaction>
</comment>
<comment type="similarity">
    <text evidence="1">Belongs to the IMPDH/GMPR family. GuaC type 2 subfamily.</text>
</comment>
<organism>
    <name type="scientific">Staphylococcus aureus (strain MRSA252)</name>
    <dbReference type="NCBI Taxonomy" id="282458"/>
    <lineage>
        <taxon>Bacteria</taxon>
        <taxon>Bacillati</taxon>
        <taxon>Bacillota</taxon>
        <taxon>Bacilli</taxon>
        <taxon>Bacillales</taxon>
        <taxon>Staphylococcaceae</taxon>
        <taxon>Staphylococcus</taxon>
    </lineage>
</organism>
<protein>
    <recommendedName>
        <fullName evidence="1">GMP reductase</fullName>
        <ecNumber evidence="1">1.7.1.7</ecNumber>
    </recommendedName>
    <alternativeName>
        <fullName evidence="1">Guanosine 5'-monophosphate oxidoreductase</fullName>
        <shortName evidence="1">Guanosine monophosphate reductase</shortName>
    </alternativeName>
</protein>
<evidence type="ECO:0000255" key="1">
    <source>
        <dbReference type="HAMAP-Rule" id="MF_01511"/>
    </source>
</evidence>
<reference key="1">
    <citation type="journal article" date="2004" name="Proc. Natl. Acad. Sci. U.S.A.">
        <title>Complete genomes of two clinical Staphylococcus aureus strains: evidence for the rapid evolution of virulence and drug resistance.</title>
        <authorList>
            <person name="Holden M.T.G."/>
            <person name="Feil E.J."/>
            <person name="Lindsay J.A."/>
            <person name="Peacock S.J."/>
            <person name="Day N.P.J."/>
            <person name="Enright M.C."/>
            <person name="Foster T.J."/>
            <person name="Moore C.E."/>
            <person name="Hurst L."/>
            <person name="Atkin R."/>
            <person name="Barron A."/>
            <person name="Bason N."/>
            <person name="Bentley S.D."/>
            <person name="Chillingworth C."/>
            <person name="Chillingworth T."/>
            <person name="Churcher C."/>
            <person name="Clark L."/>
            <person name="Corton C."/>
            <person name="Cronin A."/>
            <person name="Doggett J."/>
            <person name="Dowd L."/>
            <person name="Feltwell T."/>
            <person name="Hance Z."/>
            <person name="Harris B."/>
            <person name="Hauser H."/>
            <person name="Holroyd S."/>
            <person name="Jagels K."/>
            <person name="James K.D."/>
            <person name="Lennard N."/>
            <person name="Line A."/>
            <person name="Mayes R."/>
            <person name="Moule S."/>
            <person name="Mungall K."/>
            <person name="Ormond D."/>
            <person name="Quail M.A."/>
            <person name="Rabbinowitsch E."/>
            <person name="Rutherford K.M."/>
            <person name="Sanders M."/>
            <person name="Sharp S."/>
            <person name="Simmonds M."/>
            <person name="Stevens K."/>
            <person name="Whitehead S."/>
            <person name="Barrell B.G."/>
            <person name="Spratt B.G."/>
            <person name="Parkhill J."/>
        </authorList>
    </citation>
    <scope>NUCLEOTIDE SEQUENCE [LARGE SCALE GENOMIC DNA]</scope>
    <source>
        <strain>MRSA252</strain>
    </source>
</reference>
<proteinExistence type="inferred from homology"/>
<accession>Q6GH69</accession>
<name>GUAC_STAAR</name>
<sequence>MKIFDYEDIQLIPNKCIVESRSECDTTIQFGPKKFKLPVVPANMQTVMNEKLAKWFAENDYFYIMHRFDEEARIPFIKHMQNSGLFASISVGVKKAEFDFIEKLAQEKLIPEYITIDIAHGHSDSVINMIKHIKTHIPDSFVIAGNVGTPEGVRELENAGADATKVGIGPGRVCITKIKTGFGTGGWQLAALNICSKAARKPLIADGGIRTHGDIAKSIRFGASMVMIGSLFAAHEESPGETVELDGKQYKEYFGSASEFQKGEHKNVEGKKMFVEHKGSLTDTLKEMQQDLQSSISYAGGKDLKSLRTVDYVIVRNSIFNGDRD</sequence>
<keyword id="KW-0521">NADP</keyword>
<keyword id="KW-0560">Oxidoreductase</keyword>
<gene>
    <name evidence="1" type="primary">guaC</name>
    <name type="ordered locus">SAR1347</name>
</gene>
<dbReference type="EC" id="1.7.1.7" evidence="1"/>
<dbReference type="EMBL" id="BX571856">
    <property type="protein sequence ID" value="CAG40346.1"/>
    <property type="molecule type" value="Genomic_DNA"/>
</dbReference>
<dbReference type="RefSeq" id="WP_000688127.1">
    <property type="nucleotide sequence ID" value="NC_002952.2"/>
</dbReference>
<dbReference type="SMR" id="Q6GH69"/>
<dbReference type="KEGG" id="sar:SAR1347"/>
<dbReference type="HOGENOM" id="CLU_022552_5_0_9"/>
<dbReference type="Proteomes" id="UP000000596">
    <property type="component" value="Chromosome"/>
</dbReference>
<dbReference type="GO" id="GO:0005829">
    <property type="term" value="C:cytosol"/>
    <property type="evidence" value="ECO:0007669"/>
    <property type="project" value="TreeGrafter"/>
</dbReference>
<dbReference type="GO" id="GO:1902560">
    <property type="term" value="C:GMP reductase complex"/>
    <property type="evidence" value="ECO:0007669"/>
    <property type="project" value="InterPro"/>
</dbReference>
<dbReference type="GO" id="GO:0003920">
    <property type="term" value="F:GMP reductase activity"/>
    <property type="evidence" value="ECO:0007669"/>
    <property type="project" value="UniProtKB-UniRule"/>
</dbReference>
<dbReference type="GO" id="GO:0006163">
    <property type="term" value="P:purine nucleotide metabolic process"/>
    <property type="evidence" value="ECO:0007669"/>
    <property type="project" value="UniProtKB-UniRule"/>
</dbReference>
<dbReference type="CDD" id="cd00381">
    <property type="entry name" value="IMPDH"/>
    <property type="match status" value="1"/>
</dbReference>
<dbReference type="FunFam" id="3.20.20.70:FF:000079">
    <property type="entry name" value="GMP reductase"/>
    <property type="match status" value="1"/>
</dbReference>
<dbReference type="Gene3D" id="3.20.20.70">
    <property type="entry name" value="Aldolase class I"/>
    <property type="match status" value="1"/>
</dbReference>
<dbReference type="HAMAP" id="MF_01511">
    <property type="entry name" value="GMP_reduct_type2"/>
    <property type="match status" value="1"/>
</dbReference>
<dbReference type="InterPro" id="IPR013785">
    <property type="entry name" value="Aldolase_TIM"/>
</dbReference>
<dbReference type="InterPro" id="IPR050139">
    <property type="entry name" value="GMP_reductase"/>
</dbReference>
<dbReference type="InterPro" id="IPR005994">
    <property type="entry name" value="GuaC_type_2"/>
</dbReference>
<dbReference type="InterPro" id="IPR015875">
    <property type="entry name" value="IMP_DH/GMP_Rdtase_CS"/>
</dbReference>
<dbReference type="InterPro" id="IPR001093">
    <property type="entry name" value="IMP_DH_GMPRt"/>
</dbReference>
<dbReference type="NCBIfam" id="TIGR01306">
    <property type="entry name" value="GMP_reduct_2"/>
    <property type="match status" value="1"/>
</dbReference>
<dbReference type="NCBIfam" id="NF003966">
    <property type="entry name" value="PRK05458.1"/>
    <property type="match status" value="1"/>
</dbReference>
<dbReference type="PANTHER" id="PTHR43170">
    <property type="entry name" value="GMP REDUCTASE"/>
    <property type="match status" value="1"/>
</dbReference>
<dbReference type="PANTHER" id="PTHR43170:SF5">
    <property type="entry name" value="GMP REDUCTASE"/>
    <property type="match status" value="1"/>
</dbReference>
<dbReference type="Pfam" id="PF00478">
    <property type="entry name" value="IMPDH"/>
    <property type="match status" value="1"/>
</dbReference>
<dbReference type="PIRSF" id="PIRSF036500">
    <property type="entry name" value="GMP_red_Firmic"/>
    <property type="match status" value="1"/>
</dbReference>
<dbReference type="SMART" id="SM01240">
    <property type="entry name" value="IMPDH"/>
    <property type="match status" value="1"/>
</dbReference>
<dbReference type="SUPFAM" id="SSF51412">
    <property type="entry name" value="Inosine monophosphate dehydrogenase (IMPDH)"/>
    <property type="match status" value="1"/>
</dbReference>
<dbReference type="PROSITE" id="PS00487">
    <property type="entry name" value="IMP_DH_GMP_RED"/>
    <property type="match status" value="1"/>
</dbReference>